<accession>Q0UFY4</accession>
<keyword id="KW-0031">Aminopeptidase</keyword>
<keyword id="KW-0378">Hydrolase</keyword>
<keyword id="KW-0464">Manganese</keyword>
<keyword id="KW-0479">Metal-binding</keyword>
<keyword id="KW-0482">Metalloprotease</keyword>
<keyword id="KW-0645">Protease</keyword>
<proteinExistence type="inferred from homology"/>
<comment type="function">
    <text evidence="1">Catalyzes the removal of a penultimate prolyl residue from the N-termini of peptides.</text>
</comment>
<comment type="catalytic activity">
    <reaction>
        <text>Release of any N-terminal amino acid, including proline, that is linked to proline, even from a dipeptide or tripeptide.</text>
        <dbReference type="EC" id="3.4.11.9"/>
    </reaction>
</comment>
<comment type="cofactor">
    <cofactor evidence="1">
        <name>Mn(2+)</name>
        <dbReference type="ChEBI" id="CHEBI:29035"/>
    </cofactor>
    <text evidence="1">Binds 2 manganese ions per subunit.</text>
</comment>
<comment type="similarity">
    <text evidence="2">Belongs to the peptidase M24B family.</text>
</comment>
<organism>
    <name type="scientific">Phaeosphaeria nodorum (strain SN15 / ATCC MYA-4574 / FGSC 10173)</name>
    <name type="common">Glume blotch fungus</name>
    <name type="synonym">Parastagonospora nodorum</name>
    <dbReference type="NCBI Taxonomy" id="321614"/>
    <lineage>
        <taxon>Eukaryota</taxon>
        <taxon>Fungi</taxon>
        <taxon>Dikarya</taxon>
        <taxon>Ascomycota</taxon>
        <taxon>Pezizomycotina</taxon>
        <taxon>Dothideomycetes</taxon>
        <taxon>Pleosporomycetidae</taxon>
        <taxon>Pleosporales</taxon>
        <taxon>Pleosporineae</taxon>
        <taxon>Phaeosphaeriaceae</taxon>
        <taxon>Parastagonospora</taxon>
    </lineage>
</organism>
<sequence>MPRDALSFELQLSAGLEATEHKLDMLTRLLRRTHVAVKHPLLASRAFHTSPALRAIDMAKVDTTERLAELRKLMKERKVDVYTYISGFTGSAGYAVVTHDKAALATDGRYFNQAEKQLDSNWELLKQGIQDVPTIQEWTADQVEGGKVVGVDPSVVTGADARKLAEKIKKKGGEYKAVDDNLVDLVWAAERPARPSEKVIVQPMEYSGKSFDEKVEDLRKELEKKKSLGFVVSMLDEVAWLFNLRGNDIPYNPVFFSYAVITPTVVTLYVDESKLPKEVKDHLGDKVAIRPYEAIFGDITALSKDAFEAADADATKKFLTSNRASWALNKALGGDDKVEEIRSPIGDAKAVKNEVELEGMRQCHIRDGAAISEYFAWLEDQLLNKKATLDEVDGADKLEAIRKKHDKFMGLSFDTISSTGPNGAVIHYKPEKGACSIIDPNAIYLCDSGAQYHDGTTDTTRTLHFTKPTDMEKKAYTLVLKGNIALERVKFPKGTTGFALDSIARQFLWAEGLDYRHGTGHGVGSFLNVHEGPIGIGTRVQYSEVSLAVGNVISDEPGYYEDGKFGIRIENMIMVKEVETNHKFGDKPYLGFEHVTLTPHCRNLVDMTLLTEDEKKFINDYHKEVFEKTSKFFENDKLTMDWLKRETAPY</sequence>
<feature type="chain" id="PRO_0000411805" description="Probable Xaa-Pro aminopeptidase P">
    <location>
        <begin position="1"/>
        <end position="650"/>
    </location>
</feature>
<feature type="binding site" evidence="1">
    <location>
        <position position="447"/>
    </location>
    <ligand>
        <name>Mn(2+)</name>
        <dbReference type="ChEBI" id="CHEBI:29035"/>
        <label>2</label>
    </ligand>
</feature>
<feature type="binding site" evidence="1">
    <location>
        <position position="458"/>
    </location>
    <ligand>
        <name>Mn(2+)</name>
        <dbReference type="ChEBI" id="CHEBI:29035"/>
        <label>1</label>
    </ligand>
</feature>
<feature type="binding site" evidence="1">
    <location>
        <position position="458"/>
    </location>
    <ligand>
        <name>Mn(2+)</name>
        <dbReference type="ChEBI" id="CHEBI:29035"/>
        <label>2</label>
    </ligand>
</feature>
<feature type="binding site" evidence="1">
    <location>
        <position position="556"/>
    </location>
    <ligand>
        <name>Mn(2+)</name>
        <dbReference type="ChEBI" id="CHEBI:29035"/>
        <label>1</label>
    </ligand>
</feature>
<feature type="binding site" evidence="1">
    <location>
        <position position="570"/>
    </location>
    <ligand>
        <name>Mn(2+)</name>
        <dbReference type="ChEBI" id="CHEBI:29035"/>
        <label>1</label>
    </ligand>
</feature>
<feature type="binding site" evidence="1">
    <location>
        <position position="570"/>
    </location>
    <ligand>
        <name>Mn(2+)</name>
        <dbReference type="ChEBI" id="CHEBI:29035"/>
        <label>2</label>
    </ligand>
</feature>
<reference key="1">
    <citation type="journal article" date="2007" name="Plant Cell">
        <title>Dothideomycete-plant interactions illuminated by genome sequencing and EST analysis of the wheat pathogen Stagonospora nodorum.</title>
        <authorList>
            <person name="Hane J.K."/>
            <person name="Lowe R.G.T."/>
            <person name="Solomon P.S."/>
            <person name="Tan K.-C."/>
            <person name="Schoch C.L."/>
            <person name="Spatafora J.W."/>
            <person name="Crous P.W."/>
            <person name="Kodira C.D."/>
            <person name="Birren B.W."/>
            <person name="Galagan J.E."/>
            <person name="Torriani S.F.F."/>
            <person name="McDonald B.A."/>
            <person name="Oliver R.P."/>
        </authorList>
    </citation>
    <scope>NUCLEOTIDE SEQUENCE [LARGE SCALE GENOMIC DNA]</scope>
    <source>
        <strain>SN15 / ATCC MYA-4574 / FGSC 10173</strain>
    </source>
</reference>
<evidence type="ECO:0000250" key="1"/>
<evidence type="ECO:0000305" key="2"/>
<name>AMPP1_PHANO</name>
<dbReference type="EC" id="3.4.11.9"/>
<dbReference type="EMBL" id="CH445338">
    <property type="protein sequence ID" value="EAT83522.1"/>
    <property type="molecule type" value="Genomic_DNA"/>
</dbReference>
<dbReference type="RefSeq" id="XP_001799625.1">
    <property type="nucleotide sequence ID" value="XM_001799573.1"/>
</dbReference>
<dbReference type="SMR" id="Q0UFY4"/>
<dbReference type="FunCoup" id="Q0UFY4">
    <property type="interactions" value="362"/>
</dbReference>
<dbReference type="STRING" id="321614.Q0UFY4"/>
<dbReference type="MEROPS" id="M24.A10"/>
<dbReference type="EnsemblFungi" id="SNOT_09330">
    <property type="protein sequence ID" value="SNOT_09330"/>
    <property type="gene ID" value="SNOG_09330"/>
</dbReference>
<dbReference type="GeneID" id="5976526"/>
<dbReference type="KEGG" id="pno:SNOG_09330"/>
<dbReference type="VEuPathDB" id="FungiDB:JI435_093300"/>
<dbReference type="eggNOG" id="KOG2413">
    <property type="taxonomic scope" value="Eukaryota"/>
</dbReference>
<dbReference type="HOGENOM" id="CLU_011781_2_3_1"/>
<dbReference type="InParanoid" id="Q0UFY4"/>
<dbReference type="OMA" id="EPGMILS"/>
<dbReference type="Proteomes" id="UP000001055">
    <property type="component" value="Unassembled WGS sequence"/>
</dbReference>
<dbReference type="GO" id="GO:0005737">
    <property type="term" value="C:cytoplasm"/>
    <property type="evidence" value="ECO:0007669"/>
    <property type="project" value="UniProtKB-ARBA"/>
</dbReference>
<dbReference type="GO" id="GO:0046872">
    <property type="term" value="F:metal ion binding"/>
    <property type="evidence" value="ECO:0007669"/>
    <property type="project" value="UniProtKB-KW"/>
</dbReference>
<dbReference type="GO" id="GO:0070006">
    <property type="term" value="F:metalloaminopeptidase activity"/>
    <property type="evidence" value="ECO:0007669"/>
    <property type="project" value="InterPro"/>
</dbReference>
<dbReference type="GO" id="GO:0006508">
    <property type="term" value="P:proteolysis"/>
    <property type="evidence" value="ECO:0007669"/>
    <property type="project" value="UniProtKB-KW"/>
</dbReference>
<dbReference type="CDD" id="cd01085">
    <property type="entry name" value="APP"/>
    <property type="match status" value="1"/>
</dbReference>
<dbReference type="FunFam" id="3.40.350.10:FF:000010">
    <property type="entry name" value="Probable Xaa-Pro aminopeptidase P"/>
    <property type="match status" value="1"/>
</dbReference>
<dbReference type="FunFam" id="3.90.230.10:FF:000007">
    <property type="entry name" value="Xaa-Pro aminopeptidase P"/>
    <property type="match status" value="1"/>
</dbReference>
<dbReference type="Gene3D" id="3.90.230.10">
    <property type="entry name" value="Creatinase/methionine aminopeptidase superfamily"/>
    <property type="match status" value="1"/>
</dbReference>
<dbReference type="Gene3D" id="3.40.350.10">
    <property type="entry name" value="Creatinase/prolidase N-terminal domain"/>
    <property type="match status" value="2"/>
</dbReference>
<dbReference type="InterPro" id="IPR029149">
    <property type="entry name" value="Creatin/AminoP/Spt16_N"/>
</dbReference>
<dbReference type="InterPro" id="IPR036005">
    <property type="entry name" value="Creatinase/aminopeptidase-like"/>
</dbReference>
<dbReference type="InterPro" id="IPR000587">
    <property type="entry name" value="Creatinase_N"/>
</dbReference>
<dbReference type="InterPro" id="IPR000994">
    <property type="entry name" value="Pept_M24"/>
</dbReference>
<dbReference type="InterPro" id="IPR033740">
    <property type="entry name" value="Pept_M24B"/>
</dbReference>
<dbReference type="InterPro" id="IPR032416">
    <property type="entry name" value="Peptidase_M24_C"/>
</dbReference>
<dbReference type="InterPro" id="IPR001131">
    <property type="entry name" value="Peptidase_M24B_aminopep-P_CS"/>
</dbReference>
<dbReference type="InterPro" id="IPR050422">
    <property type="entry name" value="X-Pro_aminopeptidase_P"/>
</dbReference>
<dbReference type="PANTHER" id="PTHR43763">
    <property type="entry name" value="XAA-PRO AMINOPEPTIDASE 1"/>
    <property type="match status" value="1"/>
</dbReference>
<dbReference type="PANTHER" id="PTHR43763:SF6">
    <property type="entry name" value="XAA-PRO AMINOPEPTIDASE 1"/>
    <property type="match status" value="1"/>
</dbReference>
<dbReference type="Pfam" id="PF01321">
    <property type="entry name" value="Creatinase_N"/>
    <property type="match status" value="1"/>
</dbReference>
<dbReference type="Pfam" id="PF16189">
    <property type="entry name" value="Creatinase_N_2"/>
    <property type="match status" value="1"/>
</dbReference>
<dbReference type="Pfam" id="PF00557">
    <property type="entry name" value="Peptidase_M24"/>
    <property type="match status" value="1"/>
</dbReference>
<dbReference type="Pfam" id="PF16188">
    <property type="entry name" value="Peptidase_M24_C"/>
    <property type="match status" value="1"/>
</dbReference>
<dbReference type="SUPFAM" id="SSF55920">
    <property type="entry name" value="Creatinase/aminopeptidase"/>
    <property type="match status" value="1"/>
</dbReference>
<dbReference type="SUPFAM" id="SSF53092">
    <property type="entry name" value="Creatinase/prolidase N-terminal domain"/>
    <property type="match status" value="1"/>
</dbReference>
<dbReference type="PROSITE" id="PS00491">
    <property type="entry name" value="PROLINE_PEPTIDASE"/>
    <property type="match status" value="1"/>
</dbReference>
<gene>
    <name type="primary">AMPP</name>
    <name type="ORF">SNOG_09330</name>
</gene>
<protein>
    <recommendedName>
        <fullName>Probable Xaa-Pro aminopeptidase P</fullName>
        <shortName>AMPP</shortName>
        <shortName>Aminopeptidase P</shortName>
        <ecNumber>3.4.11.9</ecNumber>
    </recommendedName>
    <alternativeName>
        <fullName>Aminoacylproline aminopeptidase</fullName>
    </alternativeName>
    <alternativeName>
        <fullName>Prolidase</fullName>
    </alternativeName>
</protein>